<gene>
    <name evidence="1" type="primary">nuoN</name>
</gene>
<reference key="1">
    <citation type="journal article" date="1995" name="Gene">
        <title>Identification of five Rhodobacter capsulatus genes encoding the equivalent of ND subunits of the mitochondrial NADH-ubiquinone oxidoreductase.</title>
        <authorList>
            <person name="Dupuis A."/>
            <person name="Peinnequin A."/>
            <person name="Chevallet M."/>
            <person name="Lunardi J."/>
            <person name="Darrouzet E."/>
            <person name="Pierrard B."/>
            <person name="Procaccio V."/>
            <person name="Issartel J.P."/>
        </authorList>
    </citation>
    <scope>NUCLEOTIDE SEQUENCE [GENOMIC DNA]</scope>
    <source>
        <strain>ATCC 33303 / B10</strain>
    </source>
</reference>
<reference key="2">
    <citation type="journal article" date="1998" name="Mol. Microbiol.">
        <title>Distal genes of the nuo operon of Rhodobacter capsulatus equivalent to the mitochondrial ND subunits are all essential for the biogenesis of the respiratory NADH-ubiquinone oxidoreductase.</title>
        <authorList>
            <person name="Dupuis A."/>
            <person name="Darrouzet E."/>
            <person name="Duborjal H."/>
            <person name="Pierrard B."/>
            <person name="Chevallet M."/>
            <person name="van Belzen R."/>
            <person name="Albracht S.P.J."/>
            <person name="Lunardi J."/>
        </authorList>
    </citation>
    <scope>SUBCELLULAR LOCATION IN CHROMATOPHORE</scope>
    <scope>DISRUPTION PHENOTYPE</scope>
    <source>
        <strain>ATCC 33303 / B10</strain>
    </source>
</reference>
<feature type="chain" id="PRO_0000117696" description="NADH-quinone oxidoreductase subunit N">
    <location>
        <begin position="1"/>
        <end position="478"/>
    </location>
</feature>
<feature type="transmembrane region" description="Helical" evidence="1">
    <location>
        <begin position="8"/>
        <end position="28"/>
    </location>
</feature>
<feature type="transmembrane region" description="Helical" evidence="1">
    <location>
        <begin position="38"/>
        <end position="58"/>
    </location>
</feature>
<feature type="transmembrane region" description="Helical" evidence="1">
    <location>
        <begin position="62"/>
        <end position="82"/>
    </location>
</feature>
<feature type="transmembrane region" description="Helical" evidence="1">
    <location>
        <begin position="106"/>
        <end position="126"/>
    </location>
</feature>
<feature type="transmembrane region" description="Helical" evidence="1">
    <location>
        <begin position="160"/>
        <end position="180"/>
    </location>
</feature>
<feature type="transmembrane region" description="Helical" evidence="1">
    <location>
        <begin position="200"/>
        <end position="220"/>
    </location>
</feature>
<feature type="transmembrane region" description="Helical" evidence="1">
    <location>
        <begin position="234"/>
        <end position="254"/>
    </location>
</feature>
<feature type="transmembrane region" description="Helical" evidence="1">
    <location>
        <begin position="268"/>
        <end position="288"/>
    </location>
</feature>
<feature type="transmembrane region" description="Helical" evidence="1">
    <location>
        <begin position="300"/>
        <end position="320"/>
    </location>
</feature>
<feature type="transmembrane region" description="Helical" evidence="1">
    <location>
        <begin position="322"/>
        <end position="342"/>
    </location>
</feature>
<feature type="transmembrane region" description="Helical" evidence="1">
    <location>
        <begin position="368"/>
        <end position="388"/>
    </location>
</feature>
<feature type="transmembrane region" description="Helical" evidence="1">
    <location>
        <begin position="398"/>
        <end position="418"/>
    </location>
</feature>
<feature type="transmembrane region" description="Helical" evidence="1">
    <location>
        <begin position="445"/>
        <end position="465"/>
    </location>
</feature>
<dbReference type="EC" id="7.1.1.-" evidence="1"/>
<dbReference type="EMBL" id="AF029365">
    <property type="protein sequence ID" value="AAC25005.1"/>
    <property type="molecule type" value="Genomic_DNA"/>
</dbReference>
<dbReference type="RefSeq" id="WP_013067261.1">
    <property type="nucleotide sequence ID" value="NZ_VIBE01000008.1"/>
</dbReference>
<dbReference type="SMR" id="P50973"/>
<dbReference type="GeneID" id="31490417"/>
<dbReference type="OMA" id="LMFFSEP"/>
<dbReference type="GO" id="GO:0005886">
    <property type="term" value="C:plasma membrane"/>
    <property type="evidence" value="ECO:0007669"/>
    <property type="project" value="UniProtKB-UniRule"/>
</dbReference>
<dbReference type="GO" id="GO:0042717">
    <property type="term" value="C:plasma membrane-derived chromatophore membrane"/>
    <property type="evidence" value="ECO:0007669"/>
    <property type="project" value="UniProtKB-SubCell"/>
</dbReference>
<dbReference type="GO" id="GO:0008137">
    <property type="term" value="F:NADH dehydrogenase (ubiquinone) activity"/>
    <property type="evidence" value="ECO:0007669"/>
    <property type="project" value="InterPro"/>
</dbReference>
<dbReference type="GO" id="GO:0050136">
    <property type="term" value="F:NADH:ubiquinone reductase (non-electrogenic) activity"/>
    <property type="evidence" value="ECO:0007669"/>
    <property type="project" value="UniProtKB-UniRule"/>
</dbReference>
<dbReference type="GO" id="GO:0048038">
    <property type="term" value="F:quinone binding"/>
    <property type="evidence" value="ECO:0007669"/>
    <property type="project" value="UniProtKB-KW"/>
</dbReference>
<dbReference type="GO" id="GO:0042773">
    <property type="term" value="P:ATP synthesis coupled electron transport"/>
    <property type="evidence" value="ECO:0007669"/>
    <property type="project" value="InterPro"/>
</dbReference>
<dbReference type="HAMAP" id="MF_00445">
    <property type="entry name" value="NDH1_NuoN_1"/>
    <property type="match status" value="1"/>
</dbReference>
<dbReference type="InterPro" id="IPR010096">
    <property type="entry name" value="NADH-Q_OxRdtase_suN/2"/>
</dbReference>
<dbReference type="InterPro" id="IPR001750">
    <property type="entry name" value="ND/Mrp_TM"/>
</dbReference>
<dbReference type="NCBIfam" id="TIGR01770">
    <property type="entry name" value="NDH_I_N"/>
    <property type="match status" value="1"/>
</dbReference>
<dbReference type="NCBIfam" id="NF004440">
    <property type="entry name" value="PRK05777.1-3"/>
    <property type="match status" value="1"/>
</dbReference>
<dbReference type="PANTHER" id="PTHR22773">
    <property type="entry name" value="NADH DEHYDROGENASE"/>
    <property type="match status" value="1"/>
</dbReference>
<dbReference type="Pfam" id="PF00361">
    <property type="entry name" value="Proton_antipo_M"/>
    <property type="match status" value="1"/>
</dbReference>
<dbReference type="PRINTS" id="PR01434">
    <property type="entry name" value="NADHDHGNASE5"/>
</dbReference>
<keyword id="KW-0472">Membrane</keyword>
<keyword id="KW-0520">NAD</keyword>
<keyword id="KW-0874">Quinone</keyword>
<keyword id="KW-1278">Translocase</keyword>
<keyword id="KW-0812">Transmembrane</keyword>
<keyword id="KW-1133">Transmembrane helix</keyword>
<keyword id="KW-0813">Transport</keyword>
<keyword id="KW-0830">Ubiquinone</keyword>
<comment type="function">
    <text>NDH-1 shuttles electrons from NADH, via FMN and iron-sulfur (Fe-S) centers, to quinones in the respiratory chain. The immediate electron acceptor for the enzyme in this species is believed to be ubiquinone. Couples the redox reaction to proton translocation (for every two electrons transferred, four hydrogen ions are translocated across the cytoplasmic membrane), and thus conserves the redox energy in a proton gradient.</text>
</comment>
<comment type="catalytic activity">
    <reaction evidence="1">
        <text>a quinone + NADH + 5 H(+)(in) = a quinol + NAD(+) + 4 H(+)(out)</text>
        <dbReference type="Rhea" id="RHEA:57888"/>
        <dbReference type="ChEBI" id="CHEBI:15378"/>
        <dbReference type="ChEBI" id="CHEBI:24646"/>
        <dbReference type="ChEBI" id="CHEBI:57540"/>
        <dbReference type="ChEBI" id="CHEBI:57945"/>
        <dbReference type="ChEBI" id="CHEBI:132124"/>
    </reaction>
</comment>
<comment type="subunit">
    <text evidence="3">NDH-1 is composed of 14 different subunits. Subunits NuoA, H, J, K, L, M, N constitute the membrane sector of the complex (Probable).</text>
</comment>
<comment type="subcellular location">
    <subcellularLocation>
        <location evidence="2">Cellular chromatophore membrane</location>
        <topology evidence="1 2">Multi-pass membrane protein</topology>
    </subcellularLocation>
</comment>
<comment type="disruption phenotype">
    <text evidence="2">No functional NADH-quinone oxidoreductase complex. Cells lacking this gene have a nearly normal respiratory growth phenotype on lactate, however they are unable to perform anaerobic photosynthesis. It is suggested that in R.capsulatus this complex may function in reverse flow under physiological conditions.</text>
</comment>
<comment type="similarity">
    <text evidence="1">Belongs to the complex I subunit 2 family.</text>
</comment>
<name>NUON_RHOCA</name>
<proteinExistence type="inferred from homology"/>
<evidence type="ECO:0000255" key="1">
    <source>
        <dbReference type="HAMAP-Rule" id="MF_00445"/>
    </source>
</evidence>
<evidence type="ECO:0000269" key="2">
    <source>
    </source>
</evidence>
<evidence type="ECO:0000305" key="3"/>
<accession>P50973</accession>
<sequence length="478" mass="50128">MTKAEFSLVLPEVLLAIYAMGVLLFGVWTGKDRVAKPILWASAVTMLALALIIGLGTGNDTAFGGLFIADGFARFSKVVILVSAAAVLAMSSDYMGRRGLLRFEYPILIVLAVVGMMMMVSAGDLMSLYIGLELQSLALYVVAALRRDSAVSSEAGLKYFVLGSLSSGLLLYGASLVYGFAGTTTFSGIITVVEQGHLPIGLLFGLVFLLAGLAFKVSAVPFHMWTPDVYEGSPTPVTAFFATAPKLAAMALIARVVHDAFGQVPGEWGQILAALALASMYLGAIAGIGQRDIKRLMAYSSISHMGFGLLGLAAGTAAGVESMLLYMTIYIVMNVGTFAFILSMERDGKPVTEIAALNMLSKTDPVKAFALLVLLFSLAGVPPMLGFFAKFAVIKAAIGAGFVWVPVAAVVASVIGAFYYLRIVYFMYFGEKSAPLDGRMPALQFAFLVLAAVAMLGGAINMAGVEGAAQAAAASLVN</sequence>
<organism>
    <name type="scientific">Rhodobacter capsulatus</name>
    <name type="common">Rhodopseudomonas capsulata</name>
    <dbReference type="NCBI Taxonomy" id="1061"/>
    <lineage>
        <taxon>Bacteria</taxon>
        <taxon>Pseudomonadati</taxon>
        <taxon>Pseudomonadota</taxon>
        <taxon>Alphaproteobacteria</taxon>
        <taxon>Rhodobacterales</taxon>
        <taxon>Rhodobacter group</taxon>
        <taxon>Rhodobacter</taxon>
    </lineage>
</organism>
<protein>
    <recommendedName>
        <fullName evidence="1">NADH-quinone oxidoreductase subunit N</fullName>
        <ecNumber evidence="1">7.1.1.-</ecNumber>
    </recommendedName>
    <alternativeName>
        <fullName evidence="1">NADH dehydrogenase I subunit N</fullName>
    </alternativeName>
    <alternativeName>
        <fullName evidence="1">NDH-1 subunit N</fullName>
    </alternativeName>
</protein>